<keyword id="KW-0548">Nucleotidyltransferase</keyword>
<keyword id="KW-1185">Reference proteome</keyword>
<keyword id="KW-0694">RNA-binding</keyword>
<keyword id="KW-0698">rRNA processing</keyword>
<keyword id="KW-0808">Transferase</keyword>
<keyword id="KW-0819">tRNA processing</keyword>
<keyword id="KW-0820">tRNA-binding</keyword>
<gene>
    <name evidence="1" type="primary">rph</name>
    <name type="ordered locus">CE2401</name>
</gene>
<comment type="function">
    <text evidence="1">Phosphorolytic 3'-5' exoribonuclease that plays an important role in tRNA 3'-end maturation. Removes nucleotide residues following the 3'-CCA terminus of tRNAs; can also add nucleotides to the ends of RNA molecules by using nucleoside diphosphates as substrates, but this may not be physiologically important. Probably plays a role in initiation of 16S rRNA degradation (leading to ribosome degradation) during starvation.</text>
</comment>
<comment type="catalytic activity">
    <reaction evidence="1">
        <text>tRNA(n+1) + phosphate = tRNA(n) + a ribonucleoside 5'-diphosphate</text>
        <dbReference type="Rhea" id="RHEA:10628"/>
        <dbReference type="Rhea" id="RHEA-COMP:17343"/>
        <dbReference type="Rhea" id="RHEA-COMP:17344"/>
        <dbReference type="ChEBI" id="CHEBI:43474"/>
        <dbReference type="ChEBI" id="CHEBI:57930"/>
        <dbReference type="ChEBI" id="CHEBI:173114"/>
        <dbReference type="EC" id="2.7.7.56"/>
    </reaction>
</comment>
<comment type="subunit">
    <text evidence="1">Homohexameric ring arranged as a trimer of dimers.</text>
</comment>
<comment type="similarity">
    <text evidence="1">Belongs to the RNase PH family.</text>
</comment>
<protein>
    <recommendedName>
        <fullName evidence="1">Ribonuclease PH</fullName>
        <shortName evidence="1">RNase PH</shortName>
        <ecNumber evidence="1">2.7.7.56</ecNumber>
    </recommendedName>
    <alternativeName>
        <fullName evidence="1">tRNA nucleotidyltransferase</fullName>
    </alternativeName>
</protein>
<proteinExistence type="inferred from homology"/>
<feature type="chain" id="PRO_0000139884" description="Ribonuclease PH">
    <location>
        <begin position="1"/>
        <end position="245"/>
    </location>
</feature>
<feature type="binding site" evidence="1">
    <location>
        <position position="93"/>
    </location>
    <ligand>
        <name>phosphate</name>
        <dbReference type="ChEBI" id="CHEBI:43474"/>
        <note>substrate</note>
    </ligand>
</feature>
<feature type="binding site" evidence="1">
    <location>
        <begin position="131"/>
        <end position="133"/>
    </location>
    <ligand>
        <name>phosphate</name>
        <dbReference type="ChEBI" id="CHEBI:43474"/>
        <note>substrate</note>
    </ligand>
</feature>
<organism>
    <name type="scientific">Corynebacterium efficiens (strain DSM 44549 / YS-314 / AJ 12310 / JCM 11189 / NBRC 100395)</name>
    <dbReference type="NCBI Taxonomy" id="196164"/>
    <lineage>
        <taxon>Bacteria</taxon>
        <taxon>Bacillati</taxon>
        <taxon>Actinomycetota</taxon>
        <taxon>Actinomycetes</taxon>
        <taxon>Mycobacteriales</taxon>
        <taxon>Corynebacteriaceae</taxon>
        <taxon>Corynebacterium</taxon>
    </lineage>
</organism>
<dbReference type="EC" id="2.7.7.56" evidence="1"/>
<dbReference type="EMBL" id="BA000035">
    <property type="protein sequence ID" value="BAC19211.1"/>
    <property type="molecule type" value="Genomic_DNA"/>
</dbReference>
<dbReference type="RefSeq" id="WP_006768408.1">
    <property type="nucleotide sequence ID" value="NC_004369.1"/>
</dbReference>
<dbReference type="SMR" id="Q8FMU8"/>
<dbReference type="STRING" id="196164.gene:10742839"/>
<dbReference type="KEGG" id="cef:CE2401"/>
<dbReference type="eggNOG" id="COG0689">
    <property type="taxonomic scope" value="Bacteria"/>
</dbReference>
<dbReference type="HOGENOM" id="CLU_050858_0_0_11"/>
<dbReference type="OrthoDB" id="9802265at2"/>
<dbReference type="Proteomes" id="UP000001409">
    <property type="component" value="Chromosome"/>
</dbReference>
<dbReference type="GO" id="GO:0000175">
    <property type="term" value="F:3'-5'-RNA exonuclease activity"/>
    <property type="evidence" value="ECO:0007669"/>
    <property type="project" value="UniProtKB-UniRule"/>
</dbReference>
<dbReference type="GO" id="GO:0000049">
    <property type="term" value="F:tRNA binding"/>
    <property type="evidence" value="ECO:0007669"/>
    <property type="project" value="UniProtKB-UniRule"/>
</dbReference>
<dbReference type="GO" id="GO:0009022">
    <property type="term" value="F:tRNA nucleotidyltransferase activity"/>
    <property type="evidence" value="ECO:0007669"/>
    <property type="project" value="UniProtKB-UniRule"/>
</dbReference>
<dbReference type="GO" id="GO:0016075">
    <property type="term" value="P:rRNA catabolic process"/>
    <property type="evidence" value="ECO:0007669"/>
    <property type="project" value="UniProtKB-UniRule"/>
</dbReference>
<dbReference type="GO" id="GO:0006364">
    <property type="term" value="P:rRNA processing"/>
    <property type="evidence" value="ECO:0007669"/>
    <property type="project" value="UniProtKB-KW"/>
</dbReference>
<dbReference type="GO" id="GO:0008033">
    <property type="term" value="P:tRNA processing"/>
    <property type="evidence" value="ECO:0007669"/>
    <property type="project" value="UniProtKB-UniRule"/>
</dbReference>
<dbReference type="CDD" id="cd11362">
    <property type="entry name" value="RNase_PH_bact"/>
    <property type="match status" value="1"/>
</dbReference>
<dbReference type="FunFam" id="3.30.230.70:FF:000003">
    <property type="entry name" value="Ribonuclease PH"/>
    <property type="match status" value="1"/>
</dbReference>
<dbReference type="Gene3D" id="3.30.230.70">
    <property type="entry name" value="GHMP Kinase, N-terminal domain"/>
    <property type="match status" value="1"/>
</dbReference>
<dbReference type="HAMAP" id="MF_00564">
    <property type="entry name" value="RNase_PH"/>
    <property type="match status" value="1"/>
</dbReference>
<dbReference type="InterPro" id="IPR001247">
    <property type="entry name" value="ExoRNase_PH_dom1"/>
</dbReference>
<dbReference type="InterPro" id="IPR015847">
    <property type="entry name" value="ExoRNase_PH_dom2"/>
</dbReference>
<dbReference type="InterPro" id="IPR036345">
    <property type="entry name" value="ExoRNase_PH_dom2_sf"/>
</dbReference>
<dbReference type="InterPro" id="IPR027408">
    <property type="entry name" value="PNPase/RNase_PH_dom_sf"/>
</dbReference>
<dbReference type="InterPro" id="IPR020568">
    <property type="entry name" value="Ribosomal_Su5_D2-typ_SF"/>
</dbReference>
<dbReference type="InterPro" id="IPR050080">
    <property type="entry name" value="RNase_PH"/>
</dbReference>
<dbReference type="InterPro" id="IPR002381">
    <property type="entry name" value="RNase_PH_bac-type"/>
</dbReference>
<dbReference type="InterPro" id="IPR018336">
    <property type="entry name" value="RNase_PH_CS"/>
</dbReference>
<dbReference type="NCBIfam" id="TIGR01966">
    <property type="entry name" value="RNasePH"/>
    <property type="match status" value="1"/>
</dbReference>
<dbReference type="PANTHER" id="PTHR11953">
    <property type="entry name" value="EXOSOME COMPLEX COMPONENT"/>
    <property type="match status" value="1"/>
</dbReference>
<dbReference type="PANTHER" id="PTHR11953:SF0">
    <property type="entry name" value="EXOSOME COMPLEX COMPONENT RRP41"/>
    <property type="match status" value="1"/>
</dbReference>
<dbReference type="Pfam" id="PF01138">
    <property type="entry name" value="RNase_PH"/>
    <property type="match status" value="1"/>
</dbReference>
<dbReference type="Pfam" id="PF03725">
    <property type="entry name" value="RNase_PH_C"/>
    <property type="match status" value="1"/>
</dbReference>
<dbReference type="SUPFAM" id="SSF55666">
    <property type="entry name" value="Ribonuclease PH domain 2-like"/>
    <property type="match status" value="1"/>
</dbReference>
<dbReference type="SUPFAM" id="SSF54211">
    <property type="entry name" value="Ribosomal protein S5 domain 2-like"/>
    <property type="match status" value="1"/>
</dbReference>
<dbReference type="PROSITE" id="PS01277">
    <property type="entry name" value="RIBONUCLEASE_PH"/>
    <property type="match status" value="1"/>
</dbReference>
<name>RNPH_COREF</name>
<evidence type="ECO:0000255" key="1">
    <source>
        <dbReference type="HAMAP-Rule" id="MF_00564"/>
    </source>
</evidence>
<reference key="1">
    <citation type="journal article" date="2003" name="Genome Res.">
        <title>Comparative complete genome sequence analysis of the amino acid replacements responsible for the thermostability of Corynebacterium efficiens.</title>
        <authorList>
            <person name="Nishio Y."/>
            <person name="Nakamura Y."/>
            <person name="Kawarabayasi Y."/>
            <person name="Usuda Y."/>
            <person name="Kimura E."/>
            <person name="Sugimoto S."/>
            <person name="Matsui K."/>
            <person name="Yamagishi A."/>
            <person name="Kikuchi H."/>
            <person name="Ikeo K."/>
            <person name="Gojobori T."/>
        </authorList>
    </citation>
    <scope>NUCLEOTIDE SEQUENCE [LARGE SCALE GENOMIC DNA]</scope>
    <source>
        <strain>DSM 44549 / YS-314 / AJ 12310 / JCM 11189 / NBRC 100395</strain>
    </source>
</reference>
<sequence>MTSTTSFTRADGRAQDQMRTVKITRGFTTNPAGSVLIEFGNTRVMCTASVELGVPRFKRDSGEGWLTAEYAMLPAATAERNRRESMAGKVKGRTHEISRLIGRSLRAAVDLSQLGENTIAIDCDVLQADGGTRTAAITGAYVALADAIRVLKEQGVVPGDPLLPPVAAVSVGLIDGQPCLDLPYEEDVRADVDMNVVMTESGEFVEIQGTGEETTFTRAQLNEMLDIAEKGCRELVHAQKAALGI</sequence>
<accession>Q8FMU8</accession>